<sequence>MVRIIVKNVSKVFKKGKVVALDNVNINIENGERFGILGPSGAGKTTFMRIIAGLDVPSTGELYFDDRLVASNGKLIVPPEDRKIGMVFQTWALYPNLTAFENIAFPLTNMKMSKEEIRKRVEEVAKILDIHHVLNHFPRELSGGQQQRVALARALVKDPSLLLLDEPFSNLDARMRDSARALVKEVQSRLGVTLLVVSHDPADIFAIADRVGVLVKGKLVQVGKPEDLYDNPVSIQVASLIGEINELEGKVTNEGVVIGSLRFPVSVSSDRAIIGIRPEDVKLSKDVIKDDSWILVGKGKVKVIGYQGGLFRITITPLDSEEEIFTYSDHPIHSGEEVLVYVRKDKIKVFEKN</sequence>
<proteinExistence type="evidence at protein level"/>
<accession>Q97UY8</accession>
<comment type="function">
    <text evidence="2 3 4 7 8">Part of the ABC transporter complex GlcSTUV involved in glucose uptake (Probable). Responsible for energy coupling to the transport system (PubMed:12823973, PubMed:14607117). In vitro, as a free subunit, exhibits a constitutive ATPase activity (PubMed:11807278).</text>
</comment>
<comment type="catalytic activity">
    <reaction evidence="7">
        <text>D-glucose(out) + ATP + H2O = D-glucose(in) + ADP + phosphate + H(+)</text>
        <dbReference type="Rhea" id="RHEA:60184"/>
        <dbReference type="ChEBI" id="CHEBI:4167"/>
        <dbReference type="ChEBI" id="CHEBI:15377"/>
        <dbReference type="ChEBI" id="CHEBI:15378"/>
        <dbReference type="ChEBI" id="CHEBI:30616"/>
        <dbReference type="ChEBI" id="CHEBI:43474"/>
        <dbReference type="ChEBI" id="CHEBI:456216"/>
    </reaction>
    <physiologicalReaction direction="left-to-right" evidence="7">
        <dbReference type="Rhea" id="RHEA:60185"/>
    </physiologicalReaction>
</comment>
<comment type="biophysicochemical properties">
    <kinetics>
        <KM evidence="2">290 uM for ATP</KM>
    </kinetics>
    <phDependence>
        <text evidence="2">Optimum pH is 6.5 for ATPase activity.</text>
    </phDependence>
</comment>
<comment type="subunit">
    <text evidence="4 7">The complex is composed of two ATP-binding proteins (GlcV), two transmembrane proteins (GlcT and GlcU) and a solute-binding protein (GlcS) (Probable). Forms transient head-to-tail homodimers in the presence of ATP-Mg(2+) (PubMed:14607117).</text>
</comment>
<comment type="subcellular location">
    <subcellularLocation>
        <location evidence="6">Cell membrane</location>
        <topology evidence="6">Peripheral membrane protein</topology>
    </subcellularLocation>
</comment>
<comment type="domain">
    <text evidence="3">Consists of a typical ABC-ATPase domain, comprising two subdomains, connected by a linker region to a C-terminal domain of unknown function.</text>
</comment>
<comment type="similarity">
    <text>Belongs to the ABC transporter superfamily.</text>
</comment>
<reference key="1">
    <citation type="journal article" date="2001" name="Proc. Natl. Acad. Sci. U.S.A.">
        <title>The complete genome of the crenarchaeon Sulfolobus solfataricus P2.</title>
        <authorList>
            <person name="She Q."/>
            <person name="Singh R.K."/>
            <person name="Confalonieri F."/>
            <person name="Zivanovic Y."/>
            <person name="Allard G."/>
            <person name="Awayez M.J."/>
            <person name="Chan-Weiher C.C.-Y."/>
            <person name="Clausen I.G."/>
            <person name="Curtis B.A."/>
            <person name="De Moors A."/>
            <person name="Erauso G."/>
            <person name="Fletcher C."/>
            <person name="Gordon P.M.K."/>
            <person name="Heikamp-de Jong I."/>
            <person name="Jeffries A.C."/>
            <person name="Kozera C.J."/>
            <person name="Medina N."/>
            <person name="Peng X."/>
            <person name="Thi-Ngoc H.P."/>
            <person name="Redder P."/>
            <person name="Schenk M.E."/>
            <person name="Theriault C."/>
            <person name="Tolstrup N."/>
            <person name="Charlebois R.L."/>
            <person name="Doolittle W.F."/>
            <person name="Duguet M."/>
            <person name="Gaasterland T."/>
            <person name="Garrett R.A."/>
            <person name="Ragan M.A."/>
            <person name="Sensen C.W."/>
            <person name="Van der Oost J."/>
        </authorList>
    </citation>
    <scope>NUCLEOTIDE SEQUENCE [LARGE SCALE GENOMIC DNA]</scope>
    <source>
        <strain>ATCC 35092 / DSM 1617 / JCM 11322 / P2</strain>
    </source>
</reference>
<reference key="2">
    <citation type="journal article" date="1999" name="J. Bacteriol.">
        <title>Glucose transport in the extremely thermoacidophilic Sulfolobus solfataricus involves a high-affinity membrane-integrated binding protein.</title>
        <authorList>
            <person name="Albers S.V."/>
            <person name="Elferink M.G."/>
            <person name="Charlebois R.L."/>
            <person name="Sensen C.W."/>
            <person name="Driessen A.J."/>
            <person name="Konings W.N."/>
        </authorList>
    </citation>
    <scope>FUNCTION</scope>
    <scope>CATALYTIC ACTIVITY</scope>
    <scope>SUBUNIT</scope>
</reference>
<reference key="3">
    <citation type="journal article" date="2001" name="Mol. Microbiol.">
        <title>Sugar transport in Sulfolobus solfataricus is mediated by two families of binding protein-dependent ABC transporters.</title>
        <authorList>
            <person name="Elferink M.G."/>
            <person name="Albers S.V."/>
            <person name="Konings W.N."/>
            <person name="Driessen A.J."/>
        </authorList>
    </citation>
    <scope>NOMENCLATURE</scope>
    <scope>FUNCTION</scope>
</reference>
<reference key="4">
    <citation type="journal article" date="2002" name="Acta Crystallogr. D">
        <title>Purification, crystallization and preliminary X-ray diffraction analysis of an archaeal ABC-ATPase.</title>
        <authorList>
            <person name="Verdon G."/>
            <person name="Albers S.V."/>
            <person name="Dijkstra B.W."/>
            <person name="Driessen A.J."/>
            <person name="Thunnissen A.M."/>
        </authorList>
    </citation>
    <scope>ATPASE ACTIVITY</scope>
    <scope>BIOPHYSICOCHEMICAL PROPERTIES</scope>
    <scope>CRYSTALLIZATION</scope>
    <source>
        <strain>ATCC 35092 / DSM 1617 / JCM 11322 / P2</strain>
    </source>
</reference>
<reference evidence="11 12 13 14" key="5">
    <citation type="journal article" date="2003" name="J. Mol. Biol.">
        <title>Crystal structures of the ATPase subunit of the glucose ABC transporter from Sulfolobus solfataricus: nucleotide-free and nucleotide-bound conformations.</title>
        <authorList>
            <person name="Verdon G."/>
            <person name="Albers S.V."/>
            <person name="Dijkstra B.W."/>
            <person name="Driessen A.J."/>
            <person name="Thunnissen A.M."/>
        </authorList>
    </citation>
    <scope>X-RAY CRYSTALLOGRAPHY (1.65 ANGSTROMS) OF APOPROTEIN AND IN COMPLEXES WITH ADP AND ATP ANALOG</scope>
    <scope>FUNCTION</scope>
    <scope>DOMAIN</scope>
</reference>
<reference evidence="15" key="6">
    <citation type="journal article" date="2003" name="J. Mol. Biol.">
        <title>Formation of the productive ATP-Mg2+-bound dimer of GlcV, an ABC-ATPase from Sulfolobus solfataricus.</title>
        <authorList>
            <person name="Verdon G."/>
            <person name="Albers S.V."/>
            <person name="van Oosterwijk N."/>
            <person name="Dijkstra B.W."/>
            <person name="Driessen A.J."/>
            <person name="Thunnissen A.M."/>
        </authorList>
    </citation>
    <scope>X-RAY CRYSTALLOGRAPHY (1.45 ANGSTROMS) OF MUTANT ALA-144</scope>
    <scope>FUNCTION</scope>
    <scope>ATPASE ACTIVITY</scope>
    <scope>SUBUNIT</scope>
    <scope>MUTAGENESIS OF SER-142; GLY-144 AND GLU-166</scope>
</reference>
<evidence type="ECO:0000255" key="1">
    <source>
        <dbReference type="PROSITE-ProRule" id="PRU00434"/>
    </source>
</evidence>
<evidence type="ECO:0000269" key="2">
    <source>
    </source>
</evidence>
<evidence type="ECO:0000269" key="3">
    <source>
    </source>
</evidence>
<evidence type="ECO:0000269" key="4">
    <source>
    </source>
</evidence>
<evidence type="ECO:0000303" key="5">
    <source>
    </source>
</evidence>
<evidence type="ECO:0000305" key="6"/>
<evidence type="ECO:0000305" key="7">
    <source>
    </source>
</evidence>
<evidence type="ECO:0000305" key="8">
    <source>
    </source>
</evidence>
<evidence type="ECO:0000305" key="9">
    <source>
    </source>
</evidence>
<evidence type="ECO:0000312" key="10">
    <source>
        <dbReference type="EMBL" id="AAK42960.1"/>
    </source>
</evidence>
<evidence type="ECO:0007744" key="11">
    <source>
        <dbReference type="PDB" id="1OXS"/>
    </source>
</evidence>
<evidence type="ECO:0007744" key="12">
    <source>
        <dbReference type="PDB" id="1OXT"/>
    </source>
</evidence>
<evidence type="ECO:0007744" key="13">
    <source>
        <dbReference type="PDB" id="1OXU"/>
    </source>
</evidence>
<evidence type="ECO:0007744" key="14">
    <source>
        <dbReference type="PDB" id="1OXV"/>
    </source>
</evidence>
<evidence type="ECO:0007744" key="15">
    <source>
        <dbReference type="PDB" id="1OXX"/>
    </source>
</evidence>
<evidence type="ECO:0007829" key="16">
    <source>
        <dbReference type="PDB" id="1OXX"/>
    </source>
</evidence>
<organism>
    <name type="scientific">Saccharolobus solfataricus (strain ATCC 35092 / DSM 1617 / JCM 11322 / P2)</name>
    <name type="common">Sulfolobus solfataricus</name>
    <dbReference type="NCBI Taxonomy" id="273057"/>
    <lineage>
        <taxon>Archaea</taxon>
        <taxon>Thermoproteota</taxon>
        <taxon>Thermoprotei</taxon>
        <taxon>Sulfolobales</taxon>
        <taxon>Sulfolobaceae</taxon>
        <taxon>Saccharolobus</taxon>
    </lineage>
</organism>
<gene>
    <name evidence="5" type="primary">glcV</name>
    <name evidence="10" type="ordered locus">SSO2850</name>
</gene>
<feature type="chain" id="PRO_0000447615" description="Glucose import ATP-binding protein GlcV">
    <location>
        <begin position="1"/>
        <end position="353"/>
    </location>
</feature>
<feature type="domain" description="ABC transporter" evidence="1">
    <location>
        <begin position="4"/>
        <end position="241"/>
    </location>
</feature>
<feature type="binding site" evidence="9">
    <location>
        <begin position="40"/>
        <end position="46"/>
    </location>
    <ligand>
        <name>ATP</name>
        <dbReference type="ChEBI" id="CHEBI:30616"/>
    </ligand>
</feature>
<feature type="binding site" evidence="9">
    <location>
        <position position="89"/>
    </location>
    <ligand>
        <name>ATP</name>
        <dbReference type="ChEBI" id="CHEBI:30616"/>
    </ligand>
</feature>
<feature type="binding site" evidence="9">
    <location>
        <position position="166"/>
    </location>
    <ligand>
        <name>ATP</name>
        <dbReference type="ChEBI" id="CHEBI:30616"/>
    </ligand>
</feature>
<feature type="mutagenesis site" description="Decrease in ATPase activity. Can form dimers." evidence="4">
    <original>S</original>
    <variation>A</variation>
    <location>
        <position position="142"/>
    </location>
</feature>
<feature type="mutagenesis site" description="Loss of ATPase activity. Cannot form dimers. Forms an active heterodimer; when associated with A-166." evidence="4">
    <original>G</original>
    <variation>A</variation>
    <location>
        <position position="144"/>
    </location>
</feature>
<feature type="mutagenesis site" description="Loss of ATPase activity. Can form dimers in the presence of ATP-Mg(2+). Forms an active heterodimer; when associated with A-144." evidence="4">
    <original>E</original>
    <variation>A</variation>
    <location>
        <position position="166"/>
    </location>
</feature>
<feature type="mutagenesis site" description="Strong decrease in ATPase activity. Can form dimers in the presence of ATP alone, without Mg(2+)." evidence="4">
    <original>E</original>
    <variation>Q</variation>
    <location>
        <position position="166"/>
    </location>
</feature>
<feature type="strand" evidence="16">
    <location>
        <begin position="4"/>
        <end position="13"/>
    </location>
</feature>
<feature type="helix" evidence="16">
    <location>
        <begin position="14"/>
        <end position="16"/>
    </location>
</feature>
<feature type="strand" evidence="16">
    <location>
        <begin position="18"/>
        <end position="28"/>
    </location>
</feature>
<feature type="strand" evidence="16">
    <location>
        <begin position="33"/>
        <end position="37"/>
    </location>
</feature>
<feature type="helix" evidence="16">
    <location>
        <begin position="41"/>
        <end position="52"/>
    </location>
</feature>
<feature type="strand" evidence="16">
    <location>
        <begin position="58"/>
        <end position="64"/>
    </location>
</feature>
<feature type="strand" evidence="16">
    <location>
        <begin position="67"/>
        <end position="71"/>
    </location>
</feature>
<feature type="strand" evidence="16">
    <location>
        <begin position="74"/>
        <end position="77"/>
    </location>
</feature>
<feature type="helix" evidence="16">
    <location>
        <begin position="79"/>
        <end position="81"/>
    </location>
</feature>
<feature type="strand" evidence="16">
    <location>
        <begin position="84"/>
        <end position="88"/>
    </location>
</feature>
<feature type="helix" evidence="16">
    <location>
        <begin position="99"/>
        <end position="104"/>
    </location>
</feature>
<feature type="helix" evidence="16">
    <location>
        <begin position="105"/>
        <end position="107"/>
    </location>
</feature>
<feature type="helix" evidence="16">
    <location>
        <begin position="114"/>
        <end position="127"/>
    </location>
</feature>
<feature type="helix" evidence="16">
    <location>
        <begin position="131"/>
        <end position="133"/>
    </location>
</feature>
<feature type="helix" evidence="16">
    <location>
        <begin position="138"/>
        <end position="140"/>
    </location>
</feature>
<feature type="helix" evidence="16">
    <location>
        <begin position="143"/>
        <end position="155"/>
    </location>
</feature>
<feature type="strand" evidence="16">
    <location>
        <begin position="160"/>
        <end position="166"/>
    </location>
</feature>
<feature type="turn" evidence="16">
    <location>
        <begin position="167"/>
        <end position="170"/>
    </location>
</feature>
<feature type="helix" evidence="16">
    <location>
        <begin position="173"/>
        <end position="175"/>
    </location>
</feature>
<feature type="helix" evidence="16">
    <location>
        <begin position="176"/>
        <end position="190"/>
    </location>
</feature>
<feature type="strand" evidence="16">
    <location>
        <begin position="193"/>
        <end position="199"/>
    </location>
</feature>
<feature type="helix" evidence="16">
    <location>
        <begin position="201"/>
        <end position="207"/>
    </location>
</feature>
<feature type="strand" evidence="16">
    <location>
        <begin position="209"/>
        <end position="215"/>
    </location>
</feature>
<feature type="strand" evidence="16">
    <location>
        <begin position="218"/>
        <end position="223"/>
    </location>
</feature>
<feature type="helix" evidence="16">
    <location>
        <begin position="225"/>
        <end position="230"/>
    </location>
</feature>
<feature type="helix" evidence="16">
    <location>
        <begin position="235"/>
        <end position="241"/>
    </location>
</feature>
<feature type="strand" evidence="16">
    <location>
        <begin position="245"/>
        <end position="252"/>
    </location>
</feature>
<feature type="strand" evidence="16">
    <location>
        <begin position="255"/>
        <end position="258"/>
    </location>
</feature>
<feature type="strand" evidence="16">
    <location>
        <begin position="261"/>
        <end position="264"/>
    </location>
</feature>
<feature type="strand" evidence="16">
    <location>
        <begin position="268"/>
        <end position="276"/>
    </location>
</feature>
<feature type="helix" evidence="16">
    <location>
        <begin position="278"/>
        <end position="280"/>
    </location>
</feature>
<feature type="strand" evidence="16">
    <location>
        <begin position="281"/>
        <end position="286"/>
    </location>
</feature>
<feature type="strand" evidence="16">
    <location>
        <begin position="293"/>
        <end position="307"/>
    </location>
</feature>
<feature type="strand" evidence="16">
    <location>
        <begin position="310"/>
        <end position="317"/>
    </location>
</feature>
<feature type="strand" evidence="16">
    <location>
        <begin position="324"/>
        <end position="330"/>
    </location>
</feature>
<feature type="strand" evidence="16">
    <location>
        <begin position="337"/>
        <end position="342"/>
    </location>
</feature>
<feature type="helix" evidence="16">
    <location>
        <begin position="344"/>
        <end position="346"/>
    </location>
</feature>
<feature type="strand" evidence="16">
    <location>
        <begin position="348"/>
        <end position="351"/>
    </location>
</feature>
<keyword id="KW-0002">3D-structure</keyword>
<keyword id="KW-0067">ATP-binding</keyword>
<keyword id="KW-1003">Cell membrane</keyword>
<keyword id="KW-0472">Membrane</keyword>
<keyword id="KW-0547">Nucleotide-binding</keyword>
<keyword id="KW-1185">Reference proteome</keyword>
<keyword id="KW-0762">Sugar transport</keyword>
<keyword id="KW-1278">Translocase</keyword>
<keyword id="KW-0813">Transport</keyword>
<protein>
    <recommendedName>
        <fullName evidence="6">Glucose import ATP-binding protein GlcV</fullName>
        <ecNumber evidence="7">7.5.2.-</ecNumber>
    </recommendedName>
</protein>
<dbReference type="EC" id="7.5.2.-" evidence="7"/>
<dbReference type="EMBL" id="AE006641">
    <property type="protein sequence ID" value="AAK42960.1"/>
    <property type="molecule type" value="Genomic_DNA"/>
</dbReference>
<dbReference type="PIR" id="A90463">
    <property type="entry name" value="A90463"/>
</dbReference>
<dbReference type="RefSeq" id="WP_010924001.1">
    <property type="nucleotide sequence ID" value="NC_002754.1"/>
</dbReference>
<dbReference type="PDB" id="1OXS">
    <property type="method" value="X-ray"/>
    <property type="resolution" value="1.65 A"/>
    <property type="chains" value="C=1-353"/>
</dbReference>
<dbReference type="PDB" id="1OXT">
    <property type="method" value="X-ray"/>
    <property type="resolution" value="2.10 A"/>
    <property type="chains" value="A/B/D=1-353"/>
</dbReference>
<dbReference type="PDB" id="1OXU">
    <property type="method" value="X-ray"/>
    <property type="resolution" value="2.10 A"/>
    <property type="chains" value="A/B/C=1-353"/>
</dbReference>
<dbReference type="PDB" id="1OXV">
    <property type="method" value="X-ray"/>
    <property type="resolution" value="1.95 A"/>
    <property type="chains" value="A/B/D=1-353"/>
</dbReference>
<dbReference type="PDB" id="1OXX">
    <property type="method" value="X-ray"/>
    <property type="resolution" value="1.45 A"/>
    <property type="chains" value="K=1-353"/>
</dbReference>
<dbReference type="PDBsum" id="1OXS"/>
<dbReference type="PDBsum" id="1OXT"/>
<dbReference type="PDBsum" id="1OXU"/>
<dbReference type="PDBsum" id="1OXV"/>
<dbReference type="PDBsum" id="1OXX"/>
<dbReference type="SMR" id="Q97UY8"/>
<dbReference type="FunCoup" id="Q97UY8">
    <property type="interactions" value="75"/>
</dbReference>
<dbReference type="STRING" id="273057.SSO2850"/>
<dbReference type="TCDB" id="3.A.1.1.13">
    <property type="family name" value="the atp-binding cassette (abc) superfamily"/>
</dbReference>
<dbReference type="PaxDb" id="273057-SSO2850"/>
<dbReference type="EnsemblBacteria" id="AAK42960">
    <property type="protein sequence ID" value="AAK42960"/>
    <property type="gene ID" value="SSO2850"/>
</dbReference>
<dbReference type="GeneID" id="1452879"/>
<dbReference type="GeneID" id="27429116"/>
<dbReference type="KEGG" id="sso:SSO2850"/>
<dbReference type="PATRIC" id="fig|273057.12.peg.2936"/>
<dbReference type="eggNOG" id="arCOG00175">
    <property type="taxonomic scope" value="Archaea"/>
</dbReference>
<dbReference type="HOGENOM" id="CLU_000604_1_1_2"/>
<dbReference type="InParanoid" id="Q97UY8"/>
<dbReference type="PhylomeDB" id="Q97UY8"/>
<dbReference type="BRENDA" id="7.5.2.B8">
    <property type="organism ID" value="6163"/>
</dbReference>
<dbReference type="EvolutionaryTrace" id="Q97UY8"/>
<dbReference type="Proteomes" id="UP000001974">
    <property type="component" value="Chromosome"/>
</dbReference>
<dbReference type="GO" id="GO:0055052">
    <property type="term" value="C:ATP-binding cassette (ABC) transporter complex, substrate-binding subunit-containing"/>
    <property type="evidence" value="ECO:0000318"/>
    <property type="project" value="GO_Central"/>
</dbReference>
<dbReference type="GO" id="GO:0015408">
    <property type="term" value="F:ABC-type ferric iron transporter activity"/>
    <property type="evidence" value="ECO:0007669"/>
    <property type="project" value="InterPro"/>
</dbReference>
<dbReference type="GO" id="GO:0005524">
    <property type="term" value="F:ATP binding"/>
    <property type="evidence" value="ECO:0007669"/>
    <property type="project" value="UniProtKB-KW"/>
</dbReference>
<dbReference type="GO" id="GO:0016887">
    <property type="term" value="F:ATP hydrolysis activity"/>
    <property type="evidence" value="ECO:0007669"/>
    <property type="project" value="InterPro"/>
</dbReference>
<dbReference type="CDD" id="cd03259">
    <property type="entry name" value="ABC_Carb_Solutes_like"/>
    <property type="match status" value="1"/>
</dbReference>
<dbReference type="FunFam" id="3.40.50.300:FF:000042">
    <property type="entry name" value="Maltose/maltodextrin ABC transporter, ATP-binding protein"/>
    <property type="match status" value="1"/>
</dbReference>
<dbReference type="Gene3D" id="2.40.50.100">
    <property type="match status" value="1"/>
</dbReference>
<dbReference type="Gene3D" id="2.40.50.140">
    <property type="entry name" value="Nucleic acid-binding proteins"/>
    <property type="match status" value="1"/>
</dbReference>
<dbReference type="Gene3D" id="3.40.50.300">
    <property type="entry name" value="P-loop containing nucleotide triphosphate hydrolases"/>
    <property type="match status" value="1"/>
</dbReference>
<dbReference type="InterPro" id="IPR003593">
    <property type="entry name" value="AAA+_ATPase"/>
</dbReference>
<dbReference type="InterPro" id="IPR053598">
    <property type="entry name" value="ABC-Glucose_import_ATPase"/>
</dbReference>
<dbReference type="InterPro" id="IPR003439">
    <property type="entry name" value="ABC_transporter-like_ATP-bd"/>
</dbReference>
<dbReference type="InterPro" id="IPR017871">
    <property type="entry name" value="ABC_transporter-like_CS"/>
</dbReference>
<dbReference type="InterPro" id="IPR015853">
    <property type="entry name" value="ABC_transpr_FbpC"/>
</dbReference>
<dbReference type="InterPro" id="IPR047641">
    <property type="entry name" value="ABC_transpr_MalK/UgpC-like"/>
</dbReference>
<dbReference type="InterPro" id="IPR040856">
    <property type="entry name" value="GlcV_C"/>
</dbReference>
<dbReference type="InterPro" id="IPR008995">
    <property type="entry name" value="Mo/tungstate-bd_C_term_dom"/>
</dbReference>
<dbReference type="InterPro" id="IPR012340">
    <property type="entry name" value="NA-bd_OB-fold"/>
</dbReference>
<dbReference type="InterPro" id="IPR027417">
    <property type="entry name" value="P-loop_NTPase"/>
</dbReference>
<dbReference type="NCBIfam" id="NF040933">
    <property type="entry name" value="ABC_arch_GlcV"/>
    <property type="match status" value="1"/>
</dbReference>
<dbReference type="PANTHER" id="PTHR43875:SF4">
    <property type="entry name" value="GLUCOSE IMPORT ATP-BINDING PROTEIN GLCV"/>
    <property type="match status" value="1"/>
</dbReference>
<dbReference type="PANTHER" id="PTHR43875">
    <property type="entry name" value="MALTODEXTRIN IMPORT ATP-BINDING PROTEIN MSMX"/>
    <property type="match status" value="1"/>
</dbReference>
<dbReference type="Pfam" id="PF00005">
    <property type="entry name" value="ABC_tran"/>
    <property type="match status" value="1"/>
</dbReference>
<dbReference type="Pfam" id="PF17847">
    <property type="entry name" value="GlcV_C_terminal"/>
    <property type="match status" value="1"/>
</dbReference>
<dbReference type="SMART" id="SM00382">
    <property type="entry name" value="AAA"/>
    <property type="match status" value="1"/>
</dbReference>
<dbReference type="SUPFAM" id="SSF50331">
    <property type="entry name" value="MOP-like"/>
    <property type="match status" value="1"/>
</dbReference>
<dbReference type="SUPFAM" id="SSF52540">
    <property type="entry name" value="P-loop containing nucleoside triphosphate hydrolases"/>
    <property type="match status" value="1"/>
</dbReference>
<dbReference type="PROSITE" id="PS00211">
    <property type="entry name" value="ABC_TRANSPORTER_1"/>
    <property type="match status" value="1"/>
</dbReference>
<dbReference type="PROSITE" id="PS50893">
    <property type="entry name" value="ABC_TRANSPORTER_2"/>
    <property type="match status" value="1"/>
</dbReference>
<name>GLCV_SACS2</name>